<gene>
    <name type="primary">IST3</name>
    <name type="synonym">SNU17</name>
    <name type="ordered locus">YIR005W</name>
    <name type="ORF">YIB5W</name>
</gene>
<proteinExistence type="evidence at protein level"/>
<feature type="chain" id="PRO_0000081621" description="U2 snRNP component IST3">
    <location>
        <begin position="1"/>
        <end position="148"/>
    </location>
</feature>
<feature type="domain" description="RRM" evidence="1">
    <location>
        <begin position="31"/>
        <end position="109"/>
    </location>
</feature>
<feature type="strand" evidence="12">
    <location>
        <begin position="27"/>
        <end position="29"/>
    </location>
</feature>
<feature type="strand" evidence="10">
    <location>
        <begin position="32"/>
        <end position="37"/>
    </location>
</feature>
<feature type="helix" evidence="10">
    <location>
        <begin position="44"/>
        <end position="51"/>
    </location>
</feature>
<feature type="helix" evidence="10">
    <location>
        <begin position="52"/>
        <end position="54"/>
    </location>
</feature>
<feature type="strand" evidence="10">
    <location>
        <begin position="57"/>
        <end position="64"/>
    </location>
</feature>
<feature type="strand" evidence="10">
    <location>
        <begin position="66"/>
        <end position="68"/>
    </location>
</feature>
<feature type="strand" evidence="10">
    <location>
        <begin position="71"/>
        <end position="81"/>
    </location>
</feature>
<feature type="helix" evidence="10">
    <location>
        <begin position="82"/>
        <end position="91"/>
    </location>
</feature>
<feature type="strand" evidence="10">
    <location>
        <begin position="103"/>
        <end position="105"/>
    </location>
</feature>
<feature type="helix" evidence="11">
    <location>
        <begin position="113"/>
        <end position="115"/>
    </location>
</feature>
<feature type="helix" evidence="10">
    <location>
        <begin position="116"/>
        <end position="130"/>
    </location>
</feature>
<organism>
    <name type="scientific">Saccharomyces cerevisiae (strain ATCC 204508 / S288c)</name>
    <name type="common">Baker's yeast</name>
    <dbReference type="NCBI Taxonomy" id="559292"/>
    <lineage>
        <taxon>Eukaryota</taxon>
        <taxon>Fungi</taxon>
        <taxon>Dikarya</taxon>
        <taxon>Ascomycota</taxon>
        <taxon>Saccharomycotina</taxon>
        <taxon>Saccharomycetes</taxon>
        <taxon>Saccharomycetales</taxon>
        <taxon>Saccharomycetaceae</taxon>
        <taxon>Saccharomyces</taxon>
    </lineage>
</organism>
<dbReference type="EMBL" id="X79743">
    <property type="status" value="NOT_ANNOTATED_CDS"/>
    <property type="molecule type" value="Genomic_DNA"/>
</dbReference>
<dbReference type="EMBL" id="Z38062">
    <property type="protein sequence ID" value="CAA86207.1"/>
    <property type="molecule type" value="Genomic_DNA"/>
</dbReference>
<dbReference type="EMBL" id="AY558081">
    <property type="protein sequence ID" value="AAS56407.1"/>
    <property type="molecule type" value="Genomic_DNA"/>
</dbReference>
<dbReference type="EMBL" id="BK006942">
    <property type="protein sequence ID" value="DAA08551.1"/>
    <property type="molecule type" value="Genomic_DNA"/>
</dbReference>
<dbReference type="PIR" id="S48439">
    <property type="entry name" value="S48439"/>
</dbReference>
<dbReference type="RefSeq" id="NP_012270.1">
    <property type="nucleotide sequence ID" value="NM_001179527.1"/>
</dbReference>
<dbReference type="PDB" id="2MKC">
    <property type="method" value="NMR"/>
    <property type="chains" value="A=25-138"/>
</dbReference>
<dbReference type="PDB" id="2MY2">
    <property type="method" value="NMR"/>
    <property type="chains" value="A=25-138"/>
</dbReference>
<dbReference type="PDB" id="2MY3">
    <property type="method" value="NMR"/>
    <property type="chains" value="A=25-138"/>
</dbReference>
<dbReference type="PDB" id="4UQT">
    <property type="method" value="NMR"/>
    <property type="chains" value="A=25-113"/>
</dbReference>
<dbReference type="PDB" id="5GM6">
    <property type="method" value="EM"/>
    <property type="resolution" value="3.50 A"/>
    <property type="chains" value="V=1-148"/>
</dbReference>
<dbReference type="PDB" id="5LQW">
    <property type="method" value="EM"/>
    <property type="resolution" value="5.80 A"/>
    <property type="chains" value="J=1-148"/>
</dbReference>
<dbReference type="PDB" id="5ZWM">
    <property type="method" value="EM"/>
    <property type="resolution" value="3.40 A"/>
    <property type="chains" value="X=1-148"/>
</dbReference>
<dbReference type="PDB" id="5ZWO">
    <property type="method" value="EM"/>
    <property type="resolution" value="3.90 A"/>
    <property type="chains" value="X=1-148"/>
</dbReference>
<dbReference type="PDBsum" id="2MKC"/>
<dbReference type="PDBsum" id="2MY2"/>
<dbReference type="PDBsum" id="2MY3"/>
<dbReference type="PDBsum" id="4UQT"/>
<dbReference type="PDBsum" id="5GM6"/>
<dbReference type="PDBsum" id="5LQW"/>
<dbReference type="PDBsum" id="5ZWM"/>
<dbReference type="PDBsum" id="5ZWO"/>
<dbReference type="BMRB" id="P40565"/>
<dbReference type="EMDB" id="EMD-6972"/>
<dbReference type="EMDB" id="EMD-6974"/>
<dbReference type="EMDB" id="EMD-9524"/>
<dbReference type="SMR" id="P40565"/>
<dbReference type="BioGRID" id="34996">
    <property type="interactions" value="406"/>
</dbReference>
<dbReference type="ComplexPortal" id="CPX-1649">
    <property type="entry name" value="RES complex"/>
</dbReference>
<dbReference type="ComplexPortal" id="CPX-1651">
    <property type="entry name" value="PRP19-associated complex"/>
</dbReference>
<dbReference type="ComplexPortal" id="CPX-26">
    <property type="entry name" value="U2 small nuclear ribonucleoprotein complex"/>
</dbReference>
<dbReference type="DIP" id="DIP-2076N"/>
<dbReference type="FunCoup" id="P40565">
    <property type="interactions" value="919"/>
</dbReference>
<dbReference type="IntAct" id="P40565">
    <property type="interactions" value="33"/>
</dbReference>
<dbReference type="MINT" id="P40565"/>
<dbReference type="STRING" id="4932.YIR005W"/>
<dbReference type="iPTMnet" id="P40565"/>
<dbReference type="PaxDb" id="4932-YIR005W"/>
<dbReference type="PeptideAtlas" id="P40565"/>
<dbReference type="EnsemblFungi" id="YIR005W_mRNA">
    <property type="protein sequence ID" value="YIR005W"/>
    <property type="gene ID" value="YIR005W"/>
</dbReference>
<dbReference type="GeneID" id="854821"/>
<dbReference type="KEGG" id="sce:YIR005W"/>
<dbReference type="AGR" id="SGD:S000001444"/>
<dbReference type="SGD" id="S000001444">
    <property type="gene designation" value="IST3"/>
</dbReference>
<dbReference type="VEuPathDB" id="FungiDB:YIR005W"/>
<dbReference type="eggNOG" id="KOG0126">
    <property type="taxonomic scope" value="Eukaryota"/>
</dbReference>
<dbReference type="GeneTree" id="ENSGT00890000139472"/>
<dbReference type="HOGENOM" id="CLU_045495_5_0_1"/>
<dbReference type="InParanoid" id="P40565"/>
<dbReference type="OMA" id="CAPKPQI"/>
<dbReference type="OrthoDB" id="2573941at2759"/>
<dbReference type="BioCyc" id="YEAST:G3O-31426-MONOMER"/>
<dbReference type="BioGRID-ORCS" id="854821">
    <property type="hits" value="0 hits in 10 CRISPR screens"/>
</dbReference>
<dbReference type="EvolutionaryTrace" id="P40565"/>
<dbReference type="PRO" id="PR:P40565"/>
<dbReference type="Proteomes" id="UP000002311">
    <property type="component" value="Chromosome IX"/>
</dbReference>
<dbReference type="RNAct" id="P40565">
    <property type="molecule type" value="protein"/>
</dbReference>
<dbReference type="GO" id="GO:0005737">
    <property type="term" value="C:cytoplasm"/>
    <property type="evidence" value="ECO:0007669"/>
    <property type="project" value="UniProtKB-SubCell"/>
</dbReference>
<dbReference type="GO" id="GO:0005634">
    <property type="term" value="C:nucleus"/>
    <property type="evidence" value="ECO:0000303"/>
    <property type="project" value="ComplexPortal"/>
</dbReference>
<dbReference type="GO" id="GO:0071011">
    <property type="term" value="C:precatalytic spliceosome"/>
    <property type="evidence" value="ECO:0000318"/>
    <property type="project" value="GO_Central"/>
</dbReference>
<dbReference type="GO" id="GO:0000974">
    <property type="term" value="C:Prp19 complex"/>
    <property type="evidence" value="ECO:0000353"/>
    <property type="project" value="ComplexPortal"/>
</dbReference>
<dbReference type="GO" id="GO:0070274">
    <property type="term" value="C:RES complex"/>
    <property type="evidence" value="ECO:0000314"/>
    <property type="project" value="SGD"/>
</dbReference>
<dbReference type="GO" id="GO:0005681">
    <property type="term" value="C:spliceosomal complex"/>
    <property type="evidence" value="ECO:0000303"/>
    <property type="project" value="ComplexPortal"/>
</dbReference>
<dbReference type="GO" id="GO:0005686">
    <property type="term" value="C:U2 snRNP"/>
    <property type="evidence" value="ECO:0000314"/>
    <property type="project" value="SGD"/>
</dbReference>
<dbReference type="GO" id="GO:0003723">
    <property type="term" value="F:RNA binding"/>
    <property type="evidence" value="ECO:0007669"/>
    <property type="project" value="UniProtKB-KW"/>
</dbReference>
<dbReference type="GO" id="GO:0000349">
    <property type="term" value="P:generation of catalytic spliceosome for first transesterification step"/>
    <property type="evidence" value="ECO:0000315"/>
    <property type="project" value="SGD"/>
</dbReference>
<dbReference type="GO" id="GO:0051237">
    <property type="term" value="P:maintenance of RNA location"/>
    <property type="evidence" value="ECO:0000315"/>
    <property type="project" value="ComplexPortal"/>
</dbReference>
<dbReference type="GO" id="GO:0006406">
    <property type="term" value="P:mRNA export from nucleus"/>
    <property type="evidence" value="ECO:0000315"/>
    <property type="project" value="SGD"/>
</dbReference>
<dbReference type="GO" id="GO:0000398">
    <property type="term" value="P:mRNA splicing, via spliceosome"/>
    <property type="evidence" value="ECO:0000314"/>
    <property type="project" value="SGD"/>
</dbReference>
<dbReference type="GO" id="GO:0000245">
    <property type="term" value="P:spliceosomal complex assembly"/>
    <property type="evidence" value="ECO:0000315"/>
    <property type="project" value="SGD"/>
</dbReference>
<dbReference type="GO" id="GO:1903241">
    <property type="term" value="P:U2-type prespliceosome assembly"/>
    <property type="evidence" value="ECO:0000303"/>
    <property type="project" value="ComplexPortal"/>
</dbReference>
<dbReference type="CDD" id="cd12411">
    <property type="entry name" value="RRM_ist3_like"/>
    <property type="match status" value="1"/>
</dbReference>
<dbReference type="FunFam" id="3.30.70.330:FF:000609">
    <property type="entry name" value="U2 snRNP component IST3"/>
    <property type="match status" value="1"/>
</dbReference>
<dbReference type="Gene3D" id="3.30.70.330">
    <property type="match status" value="1"/>
</dbReference>
<dbReference type="InterPro" id="IPR012677">
    <property type="entry name" value="Nucleotide-bd_a/b_plait_sf"/>
</dbReference>
<dbReference type="InterPro" id="IPR035979">
    <property type="entry name" value="RBD_domain_sf"/>
</dbReference>
<dbReference type="InterPro" id="IPR051847">
    <property type="entry name" value="RNA_proc/Spliceosome_comp"/>
</dbReference>
<dbReference type="InterPro" id="IPR000504">
    <property type="entry name" value="RRM_dom"/>
</dbReference>
<dbReference type="InterPro" id="IPR045844">
    <property type="entry name" value="RRM_Ist3-like"/>
</dbReference>
<dbReference type="PANTHER" id="PTHR45880">
    <property type="entry name" value="RNA-BINDING MOTIF PROTEIN, X-LINKED 2"/>
    <property type="match status" value="1"/>
</dbReference>
<dbReference type="PANTHER" id="PTHR45880:SF1">
    <property type="entry name" value="RNA-BINDING MOTIF PROTEIN, X-LINKED 2"/>
    <property type="match status" value="1"/>
</dbReference>
<dbReference type="Pfam" id="PF00076">
    <property type="entry name" value="RRM_1"/>
    <property type="match status" value="1"/>
</dbReference>
<dbReference type="SMART" id="SM00360">
    <property type="entry name" value="RRM"/>
    <property type="match status" value="1"/>
</dbReference>
<dbReference type="SUPFAM" id="SSF54928">
    <property type="entry name" value="RNA-binding domain, RBD"/>
    <property type="match status" value="1"/>
</dbReference>
<dbReference type="PROSITE" id="PS50102">
    <property type="entry name" value="RRM"/>
    <property type="match status" value="1"/>
</dbReference>
<comment type="function">
    <text evidence="2 7 8">Required for pre-mRNA splicing and spliceosome assembly. As part of the pre-mRNA retention and splicing (RES) complex, required for nuclear pre-mRNA retention and efficient splicing. Required for MER1-activated splicing.</text>
</comment>
<comment type="subunit">
    <text evidence="2 3 4 5 8">Component of the 45S U1.U2.U4/U6.U5 penta-snRNP particle, a subcomplex of the spliceosome. Belongs to the CWC complex (or CEF1-associated complex), a spliceosome sub-complex reminiscent of a late-stage spliceosome composed of the U2, U5 and U6 snRNAs and at least BUD13, BUD31, BRR2, CDC40, CEF1, CLF1, CUS1, CWC2, CWC15, CWC21, CWC22, CWC23, CWC24, CWC25, CWC27, ECM2, HSH155, IST3, ISY1, LEA1, MSL1, NTC20, PRP8, PRP9, PRP11, PRP19, PRP21, PRP22, PRP45, PRP46, SLU7, SMB1, SMD1, SMD2, SMD3, SMX2, SMX3, SNT309, SNU114, SPP2, SYF1, SYF2, RSE1 and YJU2. Belongs to the pre-mRNA retention and splicing (RES) complex composed of at least BUD13, IST3 and PML1. Subunit of the U2 snRNP. Interacts with RDS3.</text>
</comment>
<comment type="interaction">
    <interactant intactId="EBI-25387">
        <id>P40565</id>
    </interactant>
    <interactant intactId="EBI-24073">
        <id>P46947</id>
        <label>BUD13</label>
    </interactant>
    <organismsDiffer>false</organismsDiffer>
    <experiments>14</experiments>
</comment>
<comment type="interaction">
    <interactant intactId="EBI-25387">
        <id>P40565</id>
    </interactant>
    <interactant intactId="EBI-27110">
        <id>Q07930</id>
        <label>PML1</label>
    </interactant>
    <organismsDiffer>false</organismsDiffer>
    <experiments>6</experiments>
</comment>
<comment type="subcellular location">
    <subcellularLocation>
        <location>Cytoplasm</location>
    </subcellularLocation>
    <subcellularLocation>
        <location>Nucleus</location>
    </subcellularLocation>
</comment>
<comment type="disruption phenotype">
    <text evidence="8">Cells have a slow growth phenotype that is exacerbated at 37 degrees Celsius. Deletion mutants have a significant pre-mRNA leakage at 25 degrees Celsius.</text>
</comment>
<comment type="miscellaneous">
    <text evidence="6">Present with 922 molecules/cell in log phase SD medium.</text>
</comment>
<comment type="similarity">
    <text evidence="9">Belongs to the IST3 family.</text>
</comment>
<name>IST3_YEAST</name>
<protein>
    <recommendedName>
        <fullName>U2 snRNP component IST3</fullName>
    </recommendedName>
    <alternativeName>
        <fullName>Increased sodium tolerance protein 3</fullName>
    </alternativeName>
    <alternativeName>
        <fullName>U2 snRNP protein SNU17</fullName>
    </alternativeName>
</protein>
<keyword id="KW-0002">3D-structure</keyword>
<keyword id="KW-0963">Cytoplasm</keyword>
<keyword id="KW-0507">mRNA processing</keyword>
<keyword id="KW-0508">mRNA splicing</keyword>
<keyword id="KW-0539">Nucleus</keyword>
<keyword id="KW-1185">Reference proteome</keyword>
<keyword id="KW-0694">RNA-binding</keyword>
<keyword id="KW-0747">Spliceosome</keyword>
<sequence length="148" mass="17098">MNKIQQINDKELQSGILSPHQSWHNEYKDNAYIYIGNLNRELTEGDILTVFSEYGVPVDVILSRDENTGESQGFAYLKYEDQRSTILAVDNLNGFKIGGRALKIDHTFYRPKRSLQKYYEAVKEELDRDIVSKNNAEKLILAKKDQPN</sequence>
<evidence type="ECO:0000255" key="1">
    <source>
        <dbReference type="PROSITE-ProRule" id="PRU00176"/>
    </source>
</evidence>
<evidence type="ECO:0000269" key="2">
    <source>
    </source>
</evidence>
<evidence type="ECO:0000269" key="3">
    <source>
    </source>
</evidence>
<evidence type="ECO:0000269" key="4">
    <source>
    </source>
</evidence>
<evidence type="ECO:0000269" key="5">
    <source>
    </source>
</evidence>
<evidence type="ECO:0000269" key="6">
    <source>
    </source>
</evidence>
<evidence type="ECO:0000269" key="7">
    <source>
    </source>
</evidence>
<evidence type="ECO:0000269" key="8">
    <source>
    </source>
</evidence>
<evidence type="ECO:0000305" key="9"/>
<evidence type="ECO:0007829" key="10">
    <source>
        <dbReference type="PDB" id="2MKC"/>
    </source>
</evidence>
<evidence type="ECO:0007829" key="11">
    <source>
        <dbReference type="PDB" id="2MY3"/>
    </source>
</evidence>
<evidence type="ECO:0007829" key="12">
    <source>
        <dbReference type="PDB" id="4UQT"/>
    </source>
</evidence>
<reference key="1">
    <citation type="journal article" date="1995" name="Yeast">
        <title>Nucleotide sequence and analysis of the centromeric region of yeast chromosome IX.</title>
        <authorList>
            <person name="Voss H."/>
            <person name="Tamames J."/>
            <person name="Teodoru C."/>
            <person name="Valencia A."/>
            <person name="Sensen C."/>
            <person name="Wiemann S."/>
            <person name="Schwager C."/>
            <person name="Zimmermann J."/>
            <person name="Sander C."/>
            <person name="Ansorge W."/>
        </authorList>
    </citation>
    <scope>NUCLEOTIDE SEQUENCE [GENOMIC DNA]</scope>
    <source>
        <strain>ATCC 204508 / S288c</strain>
    </source>
</reference>
<reference key="2">
    <citation type="journal article" date="1997" name="Nature">
        <title>The nucleotide sequence of Saccharomyces cerevisiae chromosome IX.</title>
        <authorList>
            <person name="Churcher C.M."/>
            <person name="Bowman S."/>
            <person name="Badcock K."/>
            <person name="Bankier A.T."/>
            <person name="Brown D."/>
            <person name="Chillingworth T."/>
            <person name="Connor R."/>
            <person name="Devlin K."/>
            <person name="Gentles S."/>
            <person name="Hamlin N."/>
            <person name="Harris D.E."/>
            <person name="Horsnell T."/>
            <person name="Hunt S."/>
            <person name="Jagels K."/>
            <person name="Jones M."/>
            <person name="Lye G."/>
            <person name="Moule S."/>
            <person name="Odell C."/>
            <person name="Pearson D."/>
            <person name="Rajandream M.A."/>
            <person name="Rice P."/>
            <person name="Rowley N."/>
            <person name="Skelton J."/>
            <person name="Smith V."/>
            <person name="Walsh S.V."/>
            <person name="Whitehead S."/>
            <person name="Barrell B.G."/>
        </authorList>
    </citation>
    <scope>NUCLEOTIDE SEQUENCE [LARGE SCALE GENOMIC DNA]</scope>
    <source>
        <strain>ATCC 204508 / S288c</strain>
    </source>
</reference>
<reference key="3">
    <citation type="journal article" date="2014" name="G3 (Bethesda)">
        <title>The reference genome sequence of Saccharomyces cerevisiae: Then and now.</title>
        <authorList>
            <person name="Engel S.R."/>
            <person name="Dietrich F.S."/>
            <person name="Fisk D.G."/>
            <person name="Binkley G."/>
            <person name="Balakrishnan R."/>
            <person name="Costanzo M.C."/>
            <person name="Dwight S.S."/>
            <person name="Hitz B.C."/>
            <person name="Karra K."/>
            <person name="Nash R.S."/>
            <person name="Weng S."/>
            <person name="Wong E.D."/>
            <person name="Lloyd P."/>
            <person name="Skrzypek M.S."/>
            <person name="Miyasato S.R."/>
            <person name="Simison M."/>
            <person name="Cherry J.M."/>
        </authorList>
    </citation>
    <scope>GENOME REANNOTATION</scope>
    <source>
        <strain>ATCC 204508 / S288c</strain>
    </source>
</reference>
<reference key="4">
    <citation type="journal article" date="2007" name="Genome Res.">
        <title>Approaching a complete repository of sequence-verified protein-encoding clones for Saccharomyces cerevisiae.</title>
        <authorList>
            <person name="Hu Y."/>
            <person name="Rolfs A."/>
            <person name="Bhullar B."/>
            <person name="Murthy T.V.S."/>
            <person name="Zhu C."/>
            <person name="Berger M.F."/>
            <person name="Camargo A.A."/>
            <person name="Kelley F."/>
            <person name="McCarron S."/>
            <person name="Jepson D."/>
            <person name="Richardson A."/>
            <person name="Raphael J."/>
            <person name="Moreira D."/>
            <person name="Taycher E."/>
            <person name="Zuo D."/>
            <person name="Mohr S."/>
            <person name="Kane M.F."/>
            <person name="Williamson J."/>
            <person name="Simpson A.J.G."/>
            <person name="Bulyk M.L."/>
            <person name="Harlow E."/>
            <person name="Marsischky G."/>
            <person name="Kolodner R.D."/>
            <person name="LaBaer J."/>
        </authorList>
    </citation>
    <scope>NUCLEOTIDE SEQUENCE [GENOMIC DNA]</scope>
    <source>
        <strain>ATCC 204508 / S288c</strain>
    </source>
</reference>
<reference key="5">
    <citation type="journal article" date="2001" name="Mol. Cell. Biol.">
        <title>A novel yeast U2 snRNP protein, Snu17p, is required for the first catalytic step of splicing and for progression of spliceosome assembly.</title>
        <authorList>
            <person name="Gottschalk A."/>
            <person name="Bartels C."/>
            <person name="Neubauer G."/>
            <person name="Luehrmann R."/>
            <person name="Fabrizio P."/>
        </authorList>
    </citation>
    <scope>FUNCTION</scope>
    <scope>SUBUNIT</scope>
    <scope>SUBCELLULAR LOCATION</scope>
</reference>
<reference key="6">
    <citation type="journal article" date="2002" name="Mol. Cell">
        <title>Composition and functional characterization of the yeast spliceosomal penta-snRNP.</title>
        <authorList>
            <person name="Stevens S.W."/>
            <person name="Ryan D.E."/>
            <person name="Ge H.Y."/>
            <person name="Moore R.E."/>
            <person name="Young M.K."/>
            <person name="Lee T.D."/>
            <person name="Abelson J."/>
        </authorList>
    </citation>
    <scope>IDENTIFICATION IN U1.U2.U4/U6.U5 PENTA-SNRNP COMPLEX BY MASS SPECTROMETRY</scope>
</reference>
<reference key="7">
    <citation type="journal article" date="2002" name="Mol. Cell. Biol.">
        <title>Proteomics analysis reveals stable multiprotein complexes in both fission and budding yeasts containing Myb-related Cdc5p/Cef1p, novel pre-mRNA splicing factors, and snRNAs.</title>
        <authorList>
            <person name="Ohi M.D."/>
            <person name="Link A.J."/>
            <person name="Ren L."/>
            <person name="Jennings J.L."/>
            <person name="McDonald W.H."/>
            <person name="Gould K.L."/>
        </authorList>
    </citation>
    <scope>IDENTIFICATION IN THE CWC COMPLEX</scope>
    <scope>IDENTIFICATION BY MASS SPECTROMETRY</scope>
</reference>
<reference key="8">
    <citation type="journal article" date="2003" name="Mol. Cell. Biol.">
        <title>Rds3p is required for stable U2 snRNP recruitment to the splicing apparatus.</title>
        <authorList>
            <person name="Wang Q."/>
            <person name="Rymond B.C."/>
        </authorList>
    </citation>
    <scope>INTERACTION WITH RDS3</scope>
</reference>
<reference key="9">
    <citation type="journal article" date="2003" name="Nature">
        <title>Global analysis of protein localization in budding yeast.</title>
        <authorList>
            <person name="Huh W.-K."/>
            <person name="Falvo J.V."/>
            <person name="Gerke L.C."/>
            <person name="Carroll A.S."/>
            <person name="Howson R.W."/>
            <person name="Weissman J.S."/>
            <person name="O'Shea E.K."/>
        </authorList>
    </citation>
    <scope>SUBCELLULAR LOCATION [LARGE SCALE ANALYSIS]</scope>
</reference>
<reference key="10">
    <citation type="journal article" date="2003" name="Nature">
        <title>Global analysis of protein expression in yeast.</title>
        <authorList>
            <person name="Ghaemmaghami S."/>
            <person name="Huh W.-K."/>
            <person name="Bower K."/>
            <person name="Howson R.W."/>
            <person name="Belle A."/>
            <person name="Dephoure N."/>
            <person name="O'Shea E.K."/>
            <person name="Weissman J.S."/>
        </authorList>
    </citation>
    <scope>LEVEL OF PROTEIN EXPRESSION [LARGE SCALE ANALYSIS]</scope>
</reference>
<reference key="11">
    <citation type="journal article" date="2004" name="EMBO J.">
        <title>Proteomic analysis identifies a new complex required for nuclear pre-mRNA retention and splicing.</title>
        <authorList>
            <person name="Dziembowski A."/>
            <person name="Ventura A.-P."/>
            <person name="Rutz B."/>
            <person name="Caspary F."/>
            <person name="Faux C."/>
            <person name="Halgand F."/>
            <person name="Laprevote O."/>
            <person name="Seraphin B."/>
        </authorList>
    </citation>
    <scope>FUNCTION</scope>
    <scope>IDENTIFICATION IN THE RES COMPLEX BY MASS SPECTROMETRY</scope>
    <scope>DISRUPTION PHENOTYPE</scope>
</reference>
<reference key="12">
    <citation type="journal article" date="2004" name="Nucleic Acids Res.">
        <title>Mer1p is a modular splicing factor whose function depends on the conserved U2 snRNP protein Snu17p.</title>
        <authorList>
            <person name="Spingola M."/>
            <person name="Armisen J."/>
            <person name="Ares M. Jr."/>
        </authorList>
    </citation>
    <scope>FUNCTION</scope>
</reference>
<accession>P40565</accession>
<accession>D6VVT5</accession>